<feature type="chain" id="PRO_0000254309" description="ATP synthase subunit beta">
    <location>
        <begin position="1"/>
        <end position="464"/>
    </location>
</feature>
<feature type="binding site" evidence="1">
    <location>
        <begin position="154"/>
        <end position="161"/>
    </location>
    <ligand>
        <name>ATP</name>
        <dbReference type="ChEBI" id="CHEBI:30616"/>
    </ligand>
</feature>
<protein>
    <recommendedName>
        <fullName evidence="1">ATP synthase subunit beta</fullName>
        <ecNumber evidence="1">7.1.2.2</ecNumber>
    </recommendedName>
    <alternativeName>
        <fullName evidence="1">ATP synthase F1 sector subunit beta</fullName>
    </alternativeName>
    <alternativeName>
        <fullName evidence="1">F-ATPase subunit beta</fullName>
    </alternativeName>
</protein>
<keyword id="KW-0066">ATP synthesis</keyword>
<keyword id="KW-0067">ATP-binding</keyword>
<keyword id="KW-1003">Cell membrane</keyword>
<keyword id="KW-0139">CF(1)</keyword>
<keyword id="KW-0375">Hydrogen ion transport</keyword>
<keyword id="KW-0406">Ion transport</keyword>
<keyword id="KW-0472">Membrane</keyword>
<keyword id="KW-0547">Nucleotide-binding</keyword>
<keyword id="KW-1185">Reference proteome</keyword>
<keyword id="KW-1278">Translocase</keyword>
<keyword id="KW-0813">Transport</keyword>
<proteinExistence type="inferred from homology"/>
<sequence>MLEKNKGKIIQILGPVVDVRFTTGKLPKLLNALRVELPTKEVFTFEVAQHIGDDTVRCISMVSTNGLRRGLTVEDTGKAIMVPVGKQVLGRMFDVLGNPIDELPLEEGGEKSSIHGPIPTYEQQKTTSEILETGIKVIDLLIPYAKGGKIGLFGGAGVGKTVLVQELINNIATQHNGLSVFTGVGERTREGNDLYYEMKAAGVLDKTALVFGQMNEPPGARMRVALTGLTMAEYFRDKQNQDVLLFIDNIFRFTQAGSEVSALLGRIPSAVGYQPTLATEMGALQERITSTRSGSITSVQAVYVPADDLTDPAPATTFSHLDAKTVLDRNVAALGIYPAIDPLESSSRLLDPLVVGQEHYKVAQDVINILQRFKELQDIIAILGMGELSEEDKKIVARARKIRNFLSQPFTVAEKFSGIKGSYVKLSDTIRSFKEILNGNLDDYPEDIFRYAGSIDDVIARYKK</sequence>
<comment type="function">
    <text evidence="1">Produces ATP from ADP in the presence of a proton gradient across the membrane. The catalytic sites are hosted primarily by the beta subunits.</text>
</comment>
<comment type="catalytic activity">
    <reaction evidence="1">
        <text>ATP + H2O + 4 H(+)(in) = ADP + phosphate + 5 H(+)(out)</text>
        <dbReference type="Rhea" id="RHEA:57720"/>
        <dbReference type="ChEBI" id="CHEBI:15377"/>
        <dbReference type="ChEBI" id="CHEBI:15378"/>
        <dbReference type="ChEBI" id="CHEBI:30616"/>
        <dbReference type="ChEBI" id="CHEBI:43474"/>
        <dbReference type="ChEBI" id="CHEBI:456216"/>
        <dbReference type="EC" id="7.1.2.2"/>
    </reaction>
</comment>
<comment type="subunit">
    <text evidence="1">F-type ATPases have 2 components, CF(1) - the catalytic core - and CF(0) - the membrane proton channel. CF(1) has five subunits: alpha(3), beta(3), gamma(1), delta(1), epsilon(1). CF(0) has three main subunits: a(1), b(2) and c(9-12). The alpha and beta chains form an alternating ring which encloses part of the gamma chain. CF(1) is attached to CF(0) by a central stalk formed by the gamma and epsilon chains, while a peripheral stalk is formed by the delta and b chains.</text>
</comment>
<comment type="subcellular location">
    <subcellularLocation>
        <location evidence="1">Cell membrane</location>
        <topology evidence="1">Peripheral membrane protein</topology>
    </subcellularLocation>
</comment>
<comment type="similarity">
    <text evidence="1">Belongs to the ATPase alpha/beta chains family.</text>
</comment>
<accession>Q4A604</accession>
<reference key="1">
    <citation type="journal article" date="2005" name="J. Bacteriol.">
        <title>Swine and poultry pathogens: the complete genome sequences of two strains of Mycoplasma hyopneumoniae and a strain of Mycoplasma synoviae.</title>
        <authorList>
            <person name="Vasconcelos A.T.R."/>
            <person name="Ferreira H.B."/>
            <person name="Bizarro C.V."/>
            <person name="Bonatto S.L."/>
            <person name="Carvalho M.O."/>
            <person name="Pinto P.M."/>
            <person name="Almeida D.F."/>
            <person name="Almeida L.G.P."/>
            <person name="Almeida R."/>
            <person name="Alves-Junior L."/>
            <person name="Assuncao E.N."/>
            <person name="Azevedo V.A.C."/>
            <person name="Bogo M.R."/>
            <person name="Brigido M.M."/>
            <person name="Brocchi M."/>
            <person name="Burity H.A."/>
            <person name="Camargo A.A."/>
            <person name="Camargo S.S."/>
            <person name="Carepo M.S."/>
            <person name="Carraro D.M."/>
            <person name="de Mattos Cascardo J.C."/>
            <person name="Castro L.A."/>
            <person name="Cavalcanti G."/>
            <person name="Chemale G."/>
            <person name="Collevatti R.G."/>
            <person name="Cunha C.W."/>
            <person name="Dallagiovanna B."/>
            <person name="Dambros B.P."/>
            <person name="Dellagostin O.A."/>
            <person name="Falcao C."/>
            <person name="Fantinatti-Garboggini F."/>
            <person name="Felipe M.S.S."/>
            <person name="Fiorentin L."/>
            <person name="Franco G.R."/>
            <person name="Freitas N.S.A."/>
            <person name="Frias D."/>
            <person name="Grangeiro T.B."/>
            <person name="Grisard E.C."/>
            <person name="Guimaraes C.T."/>
            <person name="Hungria M."/>
            <person name="Jardim S.N."/>
            <person name="Krieger M.A."/>
            <person name="Laurino J.P."/>
            <person name="Lima L.F.A."/>
            <person name="Lopes M.I."/>
            <person name="Loreto E.L.S."/>
            <person name="Madeira H.M.F."/>
            <person name="Manfio G.P."/>
            <person name="Maranhao A.Q."/>
            <person name="Martinkovics C.T."/>
            <person name="Medeiros S.R.B."/>
            <person name="Moreira M.A.M."/>
            <person name="Neiva M."/>
            <person name="Ramalho-Neto C.E."/>
            <person name="Nicolas M.F."/>
            <person name="Oliveira S.C."/>
            <person name="Paixao R.F.C."/>
            <person name="Pedrosa F.O."/>
            <person name="Pena S.D.J."/>
            <person name="Pereira M."/>
            <person name="Pereira-Ferrari L."/>
            <person name="Piffer I."/>
            <person name="Pinto L.S."/>
            <person name="Potrich D.P."/>
            <person name="Salim A.C.M."/>
            <person name="Santos F.R."/>
            <person name="Schmitt R."/>
            <person name="Schneider M.P.C."/>
            <person name="Schrank A."/>
            <person name="Schrank I.S."/>
            <person name="Schuck A.F."/>
            <person name="Seuanez H.N."/>
            <person name="Silva D.W."/>
            <person name="Silva R."/>
            <person name="Silva S.C."/>
            <person name="Soares C.M.A."/>
            <person name="Souza K.R.L."/>
            <person name="Souza R.C."/>
            <person name="Staats C.C."/>
            <person name="Steffens M.B.R."/>
            <person name="Teixeira S.M.R."/>
            <person name="Urmenyi T.P."/>
            <person name="Vainstein M.H."/>
            <person name="Zuccherato L.W."/>
            <person name="Simpson A.J.G."/>
            <person name="Zaha A."/>
        </authorList>
    </citation>
    <scope>NUCLEOTIDE SEQUENCE [LARGE SCALE GENOMIC DNA]</scope>
    <source>
        <strain>53</strain>
    </source>
</reference>
<organism>
    <name type="scientific">Mycoplasmopsis synoviae (strain 53)</name>
    <name type="common">Mycoplasma synoviae</name>
    <dbReference type="NCBI Taxonomy" id="262723"/>
    <lineage>
        <taxon>Bacteria</taxon>
        <taxon>Bacillati</taxon>
        <taxon>Mycoplasmatota</taxon>
        <taxon>Mycoplasmoidales</taxon>
        <taxon>Metamycoplasmataceae</taxon>
        <taxon>Mycoplasmopsis</taxon>
    </lineage>
</organism>
<evidence type="ECO:0000255" key="1">
    <source>
        <dbReference type="HAMAP-Rule" id="MF_01347"/>
    </source>
</evidence>
<name>ATPB_MYCS5</name>
<gene>
    <name evidence="1" type="primary">atpD</name>
    <name type="ordered locus">MS53_0405</name>
</gene>
<dbReference type="EC" id="7.1.2.2" evidence="1"/>
<dbReference type="EMBL" id="AE017245">
    <property type="protein sequence ID" value="AAZ43817.1"/>
    <property type="molecule type" value="Genomic_DNA"/>
</dbReference>
<dbReference type="RefSeq" id="WP_011283548.1">
    <property type="nucleotide sequence ID" value="NC_007294.1"/>
</dbReference>
<dbReference type="SMR" id="Q4A604"/>
<dbReference type="STRING" id="262723.MS53_0405"/>
<dbReference type="KEGG" id="msy:MS53_0405"/>
<dbReference type="eggNOG" id="COG0055">
    <property type="taxonomic scope" value="Bacteria"/>
</dbReference>
<dbReference type="HOGENOM" id="CLU_022398_0_2_14"/>
<dbReference type="OrthoDB" id="9801639at2"/>
<dbReference type="Proteomes" id="UP000000549">
    <property type="component" value="Chromosome"/>
</dbReference>
<dbReference type="GO" id="GO:0005886">
    <property type="term" value="C:plasma membrane"/>
    <property type="evidence" value="ECO:0007669"/>
    <property type="project" value="UniProtKB-SubCell"/>
</dbReference>
<dbReference type="GO" id="GO:0045259">
    <property type="term" value="C:proton-transporting ATP synthase complex"/>
    <property type="evidence" value="ECO:0007669"/>
    <property type="project" value="UniProtKB-KW"/>
</dbReference>
<dbReference type="GO" id="GO:0005524">
    <property type="term" value="F:ATP binding"/>
    <property type="evidence" value="ECO:0007669"/>
    <property type="project" value="UniProtKB-UniRule"/>
</dbReference>
<dbReference type="GO" id="GO:0016887">
    <property type="term" value="F:ATP hydrolysis activity"/>
    <property type="evidence" value="ECO:0007669"/>
    <property type="project" value="InterPro"/>
</dbReference>
<dbReference type="GO" id="GO:0046933">
    <property type="term" value="F:proton-transporting ATP synthase activity, rotational mechanism"/>
    <property type="evidence" value="ECO:0007669"/>
    <property type="project" value="UniProtKB-UniRule"/>
</dbReference>
<dbReference type="CDD" id="cd18110">
    <property type="entry name" value="ATP-synt_F1_beta_C"/>
    <property type="match status" value="1"/>
</dbReference>
<dbReference type="CDD" id="cd18115">
    <property type="entry name" value="ATP-synt_F1_beta_N"/>
    <property type="match status" value="1"/>
</dbReference>
<dbReference type="CDD" id="cd01133">
    <property type="entry name" value="F1-ATPase_beta_CD"/>
    <property type="match status" value="1"/>
</dbReference>
<dbReference type="FunFam" id="1.10.1140.10:FF:000001">
    <property type="entry name" value="ATP synthase subunit beta"/>
    <property type="match status" value="1"/>
</dbReference>
<dbReference type="FunFam" id="2.40.10.170:FF:000005">
    <property type="entry name" value="ATP synthase subunit beta"/>
    <property type="match status" value="1"/>
</dbReference>
<dbReference type="FunFam" id="3.40.50.300:FF:000004">
    <property type="entry name" value="ATP synthase subunit beta"/>
    <property type="match status" value="1"/>
</dbReference>
<dbReference type="Gene3D" id="2.40.10.170">
    <property type="match status" value="1"/>
</dbReference>
<dbReference type="Gene3D" id="1.10.1140.10">
    <property type="entry name" value="Bovine Mitochondrial F1-atpase, Atp Synthase Beta Chain, Chain D, domain 3"/>
    <property type="match status" value="1"/>
</dbReference>
<dbReference type="Gene3D" id="3.40.50.300">
    <property type="entry name" value="P-loop containing nucleotide triphosphate hydrolases"/>
    <property type="match status" value="1"/>
</dbReference>
<dbReference type="HAMAP" id="MF_01347">
    <property type="entry name" value="ATP_synth_beta_bact"/>
    <property type="match status" value="1"/>
</dbReference>
<dbReference type="InterPro" id="IPR003593">
    <property type="entry name" value="AAA+_ATPase"/>
</dbReference>
<dbReference type="InterPro" id="IPR055190">
    <property type="entry name" value="ATP-synt_VA_C"/>
</dbReference>
<dbReference type="InterPro" id="IPR005722">
    <property type="entry name" value="ATP_synth_F1_bsu"/>
</dbReference>
<dbReference type="InterPro" id="IPR020003">
    <property type="entry name" value="ATPase_a/bsu_AS"/>
</dbReference>
<dbReference type="InterPro" id="IPR050053">
    <property type="entry name" value="ATPase_alpha/beta_chains"/>
</dbReference>
<dbReference type="InterPro" id="IPR004100">
    <property type="entry name" value="ATPase_F1/V1/A1_a/bsu_N"/>
</dbReference>
<dbReference type="InterPro" id="IPR036121">
    <property type="entry name" value="ATPase_F1/V1/A1_a/bsu_N_sf"/>
</dbReference>
<dbReference type="InterPro" id="IPR000194">
    <property type="entry name" value="ATPase_F1/V1/A1_a/bsu_nucl-bd"/>
</dbReference>
<dbReference type="InterPro" id="IPR024034">
    <property type="entry name" value="ATPase_F1/V1_b/a_C"/>
</dbReference>
<dbReference type="InterPro" id="IPR027417">
    <property type="entry name" value="P-loop_NTPase"/>
</dbReference>
<dbReference type="NCBIfam" id="TIGR01039">
    <property type="entry name" value="atpD"/>
    <property type="match status" value="1"/>
</dbReference>
<dbReference type="PANTHER" id="PTHR15184">
    <property type="entry name" value="ATP SYNTHASE"/>
    <property type="match status" value="1"/>
</dbReference>
<dbReference type="PANTHER" id="PTHR15184:SF71">
    <property type="entry name" value="ATP SYNTHASE SUBUNIT BETA, MITOCHONDRIAL"/>
    <property type="match status" value="1"/>
</dbReference>
<dbReference type="Pfam" id="PF00006">
    <property type="entry name" value="ATP-synt_ab"/>
    <property type="match status" value="1"/>
</dbReference>
<dbReference type="Pfam" id="PF02874">
    <property type="entry name" value="ATP-synt_ab_N"/>
    <property type="match status" value="1"/>
</dbReference>
<dbReference type="Pfam" id="PF22919">
    <property type="entry name" value="ATP-synt_VA_C"/>
    <property type="match status" value="1"/>
</dbReference>
<dbReference type="SMART" id="SM00382">
    <property type="entry name" value="AAA"/>
    <property type="match status" value="1"/>
</dbReference>
<dbReference type="SUPFAM" id="SSF47917">
    <property type="entry name" value="C-terminal domain of alpha and beta subunits of F1 ATP synthase"/>
    <property type="match status" value="1"/>
</dbReference>
<dbReference type="SUPFAM" id="SSF50615">
    <property type="entry name" value="N-terminal domain of alpha and beta subunits of F1 ATP synthase"/>
    <property type="match status" value="1"/>
</dbReference>
<dbReference type="SUPFAM" id="SSF52540">
    <property type="entry name" value="P-loop containing nucleoside triphosphate hydrolases"/>
    <property type="match status" value="1"/>
</dbReference>
<dbReference type="PROSITE" id="PS00152">
    <property type="entry name" value="ATPASE_ALPHA_BETA"/>
    <property type="match status" value="1"/>
</dbReference>